<evidence type="ECO:0000255" key="1">
    <source>
        <dbReference type="HAMAP-Rule" id="MF_00238"/>
    </source>
</evidence>
<protein>
    <recommendedName>
        <fullName evidence="1">Cytidylate kinase</fullName>
        <shortName evidence="1">CK</shortName>
        <ecNumber evidence="1">2.7.4.25</ecNumber>
    </recommendedName>
    <alternativeName>
        <fullName evidence="1">Cytidine monophosphate kinase</fullName>
        <shortName evidence="1">CMP kinase</shortName>
    </alternativeName>
</protein>
<organism>
    <name type="scientific">Aster yellows witches'-broom phytoplasma (strain AYWB)</name>
    <dbReference type="NCBI Taxonomy" id="322098"/>
    <lineage>
        <taxon>Bacteria</taxon>
        <taxon>Bacillati</taxon>
        <taxon>Mycoplasmatota</taxon>
        <taxon>Mollicutes</taxon>
        <taxon>Acholeplasmatales</taxon>
        <taxon>Acholeplasmataceae</taxon>
        <taxon>Candidatus Phytoplasma</taxon>
        <taxon>16SrI (Aster yellows group)</taxon>
    </lineage>
</organism>
<keyword id="KW-0067">ATP-binding</keyword>
<keyword id="KW-0963">Cytoplasm</keyword>
<keyword id="KW-0418">Kinase</keyword>
<keyword id="KW-0547">Nucleotide-binding</keyword>
<keyword id="KW-0808">Transferase</keyword>
<name>KCY_AYWBP</name>
<accession>Q2NIZ4</accession>
<proteinExistence type="inferred from homology"/>
<sequence>MHMRSFKIAIDGPAGSGKSTISKKLSQKLGWNHIDTGAMFRALTLYLLENEVSWHNEKSLNQILDKINLSYSCNKIFLNQEDVSLKIKSLDVEKHVSSVALIPGVRTKLLKLQKEICANTPNLIMDGRDIGTVVMPDANLKIFLTANITKRALRKQQEDAQNGKITDITQIMKQLKERDHKDYHRHLAPLSKALDAILLDTTELSIDELIAKITTLIEKKRRA</sequence>
<gene>
    <name evidence="1" type="primary">cmk</name>
    <name type="ordered locus">AYWB_482</name>
</gene>
<feature type="chain" id="PRO_1000048181" description="Cytidylate kinase">
    <location>
        <begin position="1"/>
        <end position="223"/>
    </location>
</feature>
<feature type="binding site" evidence="1">
    <location>
        <begin position="12"/>
        <end position="20"/>
    </location>
    <ligand>
        <name>ATP</name>
        <dbReference type="ChEBI" id="CHEBI:30616"/>
    </ligand>
</feature>
<reference key="1">
    <citation type="journal article" date="2006" name="J. Bacteriol.">
        <title>Living with genome instability: the adaptation of phytoplasmas to diverse environments of their insect and plant hosts.</title>
        <authorList>
            <person name="Bai X."/>
            <person name="Zhang J."/>
            <person name="Ewing A."/>
            <person name="Miller S.A."/>
            <person name="Jancso Radek A."/>
            <person name="Shevchenko D.V."/>
            <person name="Tsukerman K."/>
            <person name="Walunas T."/>
            <person name="Lapidus A."/>
            <person name="Campbell J.W."/>
            <person name="Hogenhout S.A."/>
        </authorList>
    </citation>
    <scope>NUCLEOTIDE SEQUENCE [LARGE SCALE GENOMIC DNA]</scope>
    <source>
        <strain>AYWB</strain>
    </source>
</reference>
<dbReference type="EC" id="2.7.4.25" evidence="1"/>
<dbReference type="EMBL" id="CP000061">
    <property type="protein sequence ID" value="ABC65599.1"/>
    <property type="molecule type" value="Genomic_DNA"/>
</dbReference>
<dbReference type="SMR" id="Q2NIZ4"/>
<dbReference type="STRING" id="322098.AYWB_482"/>
<dbReference type="KEGG" id="ayw:AYWB_482"/>
<dbReference type="eggNOG" id="COG0283">
    <property type="taxonomic scope" value="Bacteria"/>
</dbReference>
<dbReference type="HOGENOM" id="CLU_079959_0_2_14"/>
<dbReference type="PhylomeDB" id="Q2NIZ4"/>
<dbReference type="Proteomes" id="UP000001934">
    <property type="component" value="Chromosome"/>
</dbReference>
<dbReference type="GO" id="GO:0005829">
    <property type="term" value="C:cytosol"/>
    <property type="evidence" value="ECO:0007669"/>
    <property type="project" value="TreeGrafter"/>
</dbReference>
<dbReference type="GO" id="GO:0005524">
    <property type="term" value="F:ATP binding"/>
    <property type="evidence" value="ECO:0007669"/>
    <property type="project" value="UniProtKB-UniRule"/>
</dbReference>
<dbReference type="GO" id="GO:0036430">
    <property type="term" value="F:CMP kinase activity"/>
    <property type="evidence" value="ECO:0007669"/>
    <property type="project" value="RHEA"/>
</dbReference>
<dbReference type="GO" id="GO:0036431">
    <property type="term" value="F:dCMP kinase activity"/>
    <property type="evidence" value="ECO:0007669"/>
    <property type="project" value="RHEA"/>
</dbReference>
<dbReference type="GO" id="GO:0015949">
    <property type="term" value="P:nucleobase-containing small molecule interconversion"/>
    <property type="evidence" value="ECO:0007669"/>
    <property type="project" value="TreeGrafter"/>
</dbReference>
<dbReference type="GO" id="GO:0006220">
    <property type="term" value="P:pyrimidine nucleotide metabolic process"/>
    <property type="evidence" value="ECO:0007669"/>
    <property type="project" value="UniProtKB-UniRule"/>
</dbReference>
<dbReference type="CDD" id="cd02020">
    <property type="entry name" value="CMPK"/>
    <property type="match status" value="1"/>
</dbReference>
<dbReference type="Gene3D" id="3.40.50.300">
    <property type="entry name" value="P-loop containing nucleotide triphosphate hydrolases"/>
    <property type="match status" value="1"/>
</dbReference>
<dbReference type="HAMAP" id="MF_00238">
    <property type="entry name" value="Cytidyl_kinase_type1"/>
    <property type="match status" value="1"/>
</dbReference>
<dbReference type="InterPro" id="IPR003136">
    <property type="entry name" value="Cytidylate_kin"/>
</dbReference>
<dbReference type="InterPro" id="IPR011994">
    <property type="entry name" value="Cytidylate_kinase_dom"/>
</dbReference>
<dbReference type="InterPro" id="IPR027417">
    <property type="entry name" value="P-loop_NTPase"/>
</dbReference>
<dbReference type="NCBIfam" id="TIGR00017">
    <property type="entry name" value="cmk"/>
    <property type="match status" value="1"/>
</dbReference>
<dbReference type="PANTHER" id="PTHR21299:SF2">
    <property type="entry name" value="CYTIDYLATE KINASE"/>
    <property type="match status" value="1"/>
</dbReference>
<dbReference type="PANTHER" id="PTHR21299">
    <property type="entry name" value="CYTIDYLATE KINASE/PANTOATE-BETA-ALANINE LIGASE"/>
    <property type="match status" value="1"/>
</dbReference>
<dbReference type="Pfam" id="PF02224">
    <property type="entry name" value="Cytidylate_kin"/>
    <property type="match status" value="1"/>
</dbReference>
<dbReference type="SUPFAM" id="SSF52540">
    <property type="entry name" value="P-loop containing nucleoside triphosphate hydrolases"/>
    <property type="match status" value="1"/>
</dbReference>
<comment type="catalytic activity">
    <reaction evidence="1">
        <text>CMP + ATP = CDP + ADP</text>
        <dbReference type="Rhea" id="RHEA:11600"/>
        <dbReference type="ChEBI" id="CHEBI:30616"/>
        <dbReference type="ChEBI" id="CHEBI:58069"/>
        <dbReference type="ChEBI" id="CHEBI:60377"/>
        <dbReference type="ChEBI" id="CHEBI:456216"/>
        <dbReference type="EC" id="2.7.4.25"/>
    </reaction>
</comment>
<comment type="catalytic activity">
    <reaction evidence="1">
        <text>dCMP + ATP = dCDP + ADP</text>
        <dbReference type="Rhea" id="RHEA:25094"/>
        <dbReference type="ChEBI" id="CHEBI:30616"/>
        <dbReference type="ChEBI" id="CHEBI:57566"/>
        <dbReference type="ChEBI" id="CHEBI:58593"/>
        <dbReference type="ChEBI" id="CHEBI:456216"/>
        <dbReference type="EC" id="2.7.4.25"/>
    </reaction>
</comment>
<comment type="subcellular location">
    <subcellularLocation>
        <location evidence="1">Cytoplasm</location>
    </subcellularLocation>
</comment>
<comment type="similarity">
    <text evidence="1">Belongs to the cytidylate kinase family. Type 1 subfamily.</text>
</comment>